<name>RSMA_PROM5</name>
<sequence>MNFKNHHQKKRFGQHWLVNNLILEKIKEVAELDEKDFILEIGPGKGALTSKLLDSKISRLHAVELDKDLIDLLNNKFRNDKKFSLQQGDILSTNLDSINKKITKVIANIPYNITGPILDIFIGRLGIVSKNNYKKIIFLMQKDVVDRILSKESSKNAGAMSVRMQLISNIKRICDVPPSSFNPPPKVFSSLVVFEPLRPEKRLDIKLERYIDKLLQISFNSRRKMIRNTLNSILSEDEIKKLAELSEICFNSRPQDISINKWIKLAEGCIKITNKN</sequence>
<gene>
    <name evidence="1" type="primary">rsmA</name>
    <name evidence="1" type="synonym">ksgA</name>
    <name type="ordered locus">P9515_10161</name>
</gene>
<comment type="function">
    <text evidence="1">Specifically dimethylates two adjacent adenosines (A1518 and A1519) in the loop of a conserved hairpin near the 3'-end of 16S rRNA in the 30S particle. May play a critical role in biogenesis of 30S subunits.</text>
</comment>
<comment type="catalytic activity">
    <reaction evidence="1">
        <text>adenosine(1518)/adenosine(1519) in 16S rRNA + 4 S-adenosyl-L-methionine = N(6)-dimethyladenosine(1518)/N(6)-dimethyladenosine(1519) in 16S rRNA + 4 S-adenosyl-L-homocysteine + 4 H(+)</text>
        <dbReference type="Rhea" id="RHEA:19609"/>
        <dbReference type="Rhea" id="RHEA-COMP:10232"/>
        <dbReference type="Rhea" id="RHEA-COMP:10233"/>
        <dbReference type="ChEBI" id="CHEBI:15378"/>
        <dbReference type="ChEBI" id="CHEBI:57856"/>
        <dbReference type="ChEBI" id="CHEBI:59789"/>
        <dbReference type="ChEBI" id="CHEBI:74411"/>
        <dbReference type="ChEBI" id="CHEBI:74493"/>
        <dbReference type="EC" id="2.1.1.182"/>
    </reaction>
</comment>
<comment type="subcellular location">
    <subcellularLocation>
        <location evidence="1">Cytoplasm</location>
    </subcellularLocation>
</comment>
<comment type="similarity">
    <text evidence="1">Belongs to the class I-like SAM-binding methyltransferase superfamily. rRNA adenine N(6)-methyltransferase family. RsmA subfamily.</text>
</comment>
<proteinExistence type="inferred from homology"/>
<dbReference type="EC" id="2.1.1.182" evidence="1"/>
<dbReference type="EMBL" id="CP000552">
    <property type="protein sequence ID" value="ABM72223.1"/>
    <property type="molecule type" value="Genomic_DNA"/>
</dbReference>
<dbReference type="RefSeq" id="WP_011820324.1">
    <property type="nucleotide sequence ID" value="NC_008817.1"/>
</dbReference>
<dbReference type="SMR" id="A2BWR2"/>
<dbReference type="STRING" id="167542.P9515_10161"/>
<dbReference type="GeneID" id="60200832"/>
<dbReference type="KEGG" id="pmc:P9515_10161"/>
<dbReference type="eggNOG" id="COG0030">
    <property type="taxonomic scope" value="Bacteria"/>
</dbReference>
<dbReference type="HOGENOM" id="CLU_041220_0_1_3"/>
<dbReference type="OrthoDB" id="9814755at2"/>
<dbReference type="Proteomes" id="UP000001589">
    <property type="component" value="Chromosome"/>
</dbReference>
<dbReference type="GO" id="GO:0005829">
    <property type="term" value="C:cytosol"/>
    <property type="evidence" value="ECO:0007669"/>
    <property type="project" value="TreeGrafter"/>
</dbReference>
<dbReference type="GO" id="GO:0052908">
    <property type="term" value="F:16S rRNA (adenine(1518)-N(6)/adenine(1519)-N(6))-dimethyltransferase activity"/>
    <property type="evidence" value="ECO:0007669"/>
    <property type="project" value="UniProtKB-EC"/>
</dbReference>
<dbReference type="GO" id="GO:0003723">
    <property type="term" value="F:RNA binding"/>
    <property type="evidence" value="ECO:0007669"/>
    <property type="project" value="UniProtKB-KW"/>
</dbReference>
<dbReference type="CDD" id="cd02440">
    <property type="entry name" value="AdoMet_MTases"/>
    <property type="match status" value="1"/>
</dbReference>
<dbReference type="Gene3D" id="1.10.8.100">
    <property type="entry name" value="Ribosomal RNA adenine dimethylase-like, domain 2"/>
    <property type="match status" value="1"/>
</dbReference>
<dbReference type="Gene3D" id="3.40.50.150">
    <property type="entry name" value="Vaccinia Virus protein VP39"/>
    <property type="match status" value="1"/>
</dbReference>
<dbReference type="HAMAP" id="MF_00607">
    <property type="entry name" value="16SrRNA_methyltr_A"/>
    <property type="match status" value="1"/>
</dbReference>
<dbReference type="InterPro" id="IPR001737">
    <property type="entry name" value="KsgA/Erm"/>
</dbReference>
<dbReference type="InterPro" id="IPR023165">
    <property type="entry name" value="rRNA_Ade_diMease-like_C"/>
</dbReference>
<dbReference type="InterPro" id="IPR020596">
    <property type="entry name" value="rRNA_Ade_Mease_Trfase_CS"/>
</dbReference>
<dbReference type="InterPro" id="IPR020598">
    <property type="entry name" value="rRNA_Ade_methylase_Trfase_N"/>
</dbReference>
<dbReference type="InterPro" id="IPR011530">
    <property type="entry name" value="rRNA_adenine_dimethylase"/>
</dbReference>
<dbReference type="InterPro" id="IPR029063">
    <property type="entry name" value="SAM-dependent_MTases_sf"/>
</dbReference>
<dbReference type="NCBIfam" id="TIGR00755">
    <property type="entry name" value="ksgA"/>
    <property type="match status" value="1"/>
</dbReference>
<dbReference type="PANTHER" id="PTHR11727">
    <property type="entry name" value="DIMETHYLADENOSINE TRANSFERASE"/>
    <property type="match status" value="1"/>
</dbReference>
<dbReference type="PANTHER" id="PTHR11727:SF7">
    <property type="entry name" value="DIMETHYLADENOSINE TRANSFERASE-RELATED"/>
    <property type="match status" value="1"/>
</dbReference>
<dbReference type="Pfam" id="PF00398">
    <property type="entry name" value="RrnaAD"/>
    <property type="match status" value="1"/>
</dbReference>
<dbReference type="SMART" id="SM00650">
    <property type="entry name" value="rADc"/>
    <property type="match status" value="1"/>
</dbReference>
<dbReference type="SUPFAM" id="SSF53335">
    <property type="entry name" value="S-adenosyl-L-methionine-dependent methyltransferases"/>
    <property type="match status" value="1"/>
</dbReference>
<dbReference type="PROSITE" id="PS01131">
    <property type="entry name" value="RRNA_A_DIMETH"/>
    <property type="match status" value="1"/>
</dbReference>
<dbReference type="PROSITE" id="PS51689">
    <property type="entry name" value="SAM_RNA_A_N6_MT"/>
    <property type="match status" value="1"/>
</dbReference>
<feature type="chain" id="PRO_1000056653" description="Ribosomal RNA small subunit methyltransferase A">
    <location>
        <begin position="1"/>
        <end position="276"/>
    </location>
</feature>
<feature type="binding site" evidence="1">
    <location>
        <position position="15"/>
    </location>
    <ligand>
        <name>S-adenosyl-L-methionine</name>
        <dbReference type="ChEBI" id="CHEBI:59789"/>
    </ligand>
</feature>
<feature type="binding site" evidence="1">
    <location>
        <position position="17"/>
    </location>
    <ligand>
        <name>S-adenosyl-L-methionine</name>
        <dbReference type="ChEBI" id="CHEBI:59789"/>
    </ligand>
</feature>
<feature type="binding site" evidence="1">
    <location>
        <position position="42"/>
    </location>
    <ligand>
        <name>S-adenosyl-L-methionine</name>
        <dbReference type="ChEBI" id="CHEBI:59789"/>
    </ligand>
</feature>
<feature type="binding site" evidence="1">
    <location>
        <position position="64"/>
    </location>
    <ligand>
        <name>S-adenosyl-L-methionine</name>
        <dbReference type="ChEBI" id="CHEBI:59789"/>
    </ligand>
</feature>
<feature type="binding site" evidence="1">
    <location>
        <position position="89"/>
    </location>
    <ligand>
        <name>S-adenosyl-L-methionine</name>
        <dbReference type="ChEBI" id="CHEBI:59789"/>
    </ligand>
</feature>
<feature type="binding site" evidence="1">
    <location>
        <position position="108"/>
    </location>
    <ligand>
        <name>S-adenosyl-L-methionine</name>
        <dbReference type="ChEBI" id="CHEBI:59789"/>
    </ligand>
</feature>
<evidence type="ECO:0000255" key="1">
    <source>
        <dbReference type="HAMAP-Rule" id="MF_00607"/>
    </source>
</evidence>
<organism>
    <name type="scientific">Prochlorococcus marinus (strain MIT 9515)</name>
    <dbReference type="NCBI Taxonomy" id="167542"/>
    <lineage>
        <taxon>Bacteria</taxon>
        <taxon>Bacillati</taxon>
        <taxon>Cyanobacteriota</taxon>
        <taxon>Cyanophyceae</taxon>
        <taxon>Synechococcales</taxon>
        <taxon>Prochlorococcaceae</taxon>
        <taxon>Prochlorococcus</taxon>
    </lineage>
</organism>
<reference key="1">
    <citation type="journal article" date="2007" name="PLoS Genet.">
        <title>Patterns and implications of gene gain and loss in the evolution of Prochlorococcus.</title>
        <authorList>
            <person name="Kettler G.C."/>
            <person name="Martiny A.C."/>
            <person name="Huang K."/>
            <person name="Zucker J."/>
            <person name="Coleman M.L."/>
            <person name="Rodrigue S."/>
            <person name="Chen F."/>
            <person name="Lapidus A."/>
            <person name="Ferriera S."/>
            <person name="Johnson J."/>
            <person name="Steglich C."/>
            <person name="Church G.M."/>
            <person name="Richardson P."/>
            <person name="Chisholm S.W."/>
        </authorList>
    </citation>
    <scope>NUCLEOTIDE SEQUENCE [LARGE SCALE GENOMIC DNA]</scope>
    <source>
        <strain>MIT 9515</strain>
    </source>
</reference>
<accession>A2BWR2</accession>
<protein>
    <recommendedName>
        <fullName evidence="1">Ribosomal RNA small subunit methyltransferase A</fullName>
        <ecNumber evidence="1">2.1.1.182</ecNumber>
    </recommendedName>
    <alternativeName>
        <fullName evidence="1">16S rRNA (adenine(1518)-N(6)/adenine(1519)-N(6))-dimethyltransferase</fullName>
    </alternativeName>
    <alternativeName>
        <fullName evidence="1">16S rRNA dimethyladenosine transferase</fullName>
    </alternativeName>
    <alternativeName>
        <fullName evidence="1">16S rRNA dimethylase</fullName>
    </alternativeName>
    <alternativeName>
        <fullName evidence="1">S-adenosylmethionine-6-N', N'-adenosyl(rRNA) dimethyltransferase</fullName>
    </alternativeName>
</protein>
<keyword id="KW-0963">Cytoplasm</keyword>
<keyword id="KW-0489">Methyltransferase</keyword>
<keyword id="KW-0694">RNA-binding</keyword>
<keyword id="KW-0698">rRNA processing</keyword>
<keyword id="KW-0949">S-adenosyl-L-methionine</keyword>
<keyword id="KW-0808">Transferase</keyword>